<gene>
    <name evidence="1" type="primary">kae1</name>
    <name type="ordered locus">Tpen_0452</name>
</gene>
<protein>
    <recommendedName>
        <fullName evidence="1">tRNA N6-adenosine threonylcarbamoyltransferase</fullName>
        <ecNumber evidence="1">2.3.1.234</ecNumber>
    </recommendedName>
    <alternativeName>
        <fullName evidence="1">N6-L-threonylcarbamoyladenine synthase</fullName>
        <shortName evidence="1">t(6)A synthase</shortName>
    </alternativeName>
    <alternativeName>
        <fullName evidence="1">t(6)A37 threonylcarbamoyladenosine biosynthesis protein Kae1</fullName>
    </alternativeName>
    <alternativeName>
        <fullName evidence="1">tRNA threonylcarbamoyladenosine biosynthesis protein Kae1</fullName>
    </alternativeName>
</protein>
<sequence length="336" mass="36300">MLFGMRALKVLGIESTAHTFGVGIATSSGDILVNVNHTYVPRHGGIKPTEAAEHHSRVAPKVLSEALQKAGISVEEVDAVAVALGPGMGPCLRVGATLARYLALKFGKPLVPVNHAIAHLEISRLTTGLEDPVFVYVAGGNTMVTTFNEGRYRVFGETLDIPLGNCLDTFAREVGLGFPGVPRVEELALKGREYIPLPYTVKGQDVSYSGLLTHALSLYRSGRARLEDVCYSLVETAYSMLVEVAERALAHTGKSQLVLTGGVARSRILLEKLRRMVEDRGGVLGVVPPEYAGDNGAMIAYTGALAFSHGVRVPVEESRIQPYWRVDEVVIPWRSR</sequence>
<reference key="1">
    <citation type="journal article" date="2008" name="J. Bacteriol.">
        <title>Genome sequence of Thermofilum pendens reveals an exceptional loss of biosynthetic pathways without genome reduction.</title>
        <authorList>
            <person name="Anderson I."/>
            <person name="Rodriguez J."/>
            <person name="Susanti D."/>
            <person name="Porat I."/>
            <person name="Reich C."/>
            <person name="Ulrich L.E."/>
            <person name="Elkins J.G."/>
            <person name="Mavromatis K."/>
            <person name="Lykidis A."/>
            <person name="Kim E."/>
            <person name="Thompson L.S."/>
            <person name="Nolan M."/>
            <person name="Land M."/>
            <person name="Copeland A."/>
            <person name="Lapidus A."/>
            <person name="Lucas S."/>
            <person name="Detter C."/>
            <person name="Zhulin I.B."/>
            <person name="Olsen G.J."/>
            <person name="Whitman W."/>
            <person name="Mukhopadhyay B."/>
            <person name="Bristow J."/>
            <person name="Kyrpides N."/>
        </authorList>
    </citation>
    <scope>NUCLEOTIDE SEQUENCE [LARGE SCALE GENOMIC DNA]</scope>
    <source>
        <strain>DSM 2475 / Hrk 5</strain>
    </source>
</reference>
<organism>
    <name type="scientific">Thermofilum pendens (strain DSM 2475 / Hrk 5)</name>
    <dbReference type="NCBI Taxonomy" id="368408"/>
    <lineage>
        <taxon>Archaea</taxon>
        <taxon>Thermoproteota</taxon>
        <taxon>Thermoprotei</taxon>
        <taxon>Thermofilales</taxon>
        <taxon>Thermofilaceae</taxon>
        <taxon>Thermofilum</taxon>
    </lineage>
</organism>
<keyword id="KW-0012">Acyltransferase</keyword>
<keyword id="KW-0963">Cytoplasm</keyword>
<keyword id="KW-0408">Iron</keyword>
<keyword id="KW-0479">Metal-binding</keyword>
<keyword id="KW-1185">Reference proteome</keyword>
<keyword id="KW-0808">Transferase</keyword>
<keyword id="KW-0819">tRNA processing</keyword>
<proteinExistence type="inferred from homology"/>
<name>KAE1_THEPD</name>
<comment type="function">
    <text evidence="1">Required for the formation of a threonylcarbamoyl group on adenosine at position 37 (t(6)A37) in tRNAs that read codons beginning with adenine. Is probably involved in the transfer of the threonylcarbamoyl moiety of threonylcarbamoyl-AMP (TC-AMP) to the N6 group of A37.</text>
</comment>
<comment type="catalytic activity">
    <reaction evidence="1">
        <text>L-threonylcarbamoyladenylate + adenosine(37) in tRNA = N(6)-L-threonylcarbamoyladenosine(37) in tRNA + AMP + H(+)</text>
        <dbReference type="Rhea" id="RHEA:37059"/>
        <dbReference type="Rhea" id="RHEA-COMP:10162"/>
        <dbReference type="Rhea" id="RHEA-COMP:10163"/>
        <dbReference type="ChEBI" id="CHEBI:15378"/>
        <dbReference type="ChEBI" id="CHEBI:73682"/>
        <dbReference type="ChEBI" id="CHEBI:74411"/>
        <dbReference type="ChEBI" id="CHEBI:74418"/>
        <dbReference type="ChEBI" id="CHEBI:456215"/>
        <dbReference type="EC" id="2.3.1.234"/>
    </reaction>
</comment>
<comment type="cofactor">
    <cofactor evidence="1">
        <name>Fe(2+)</name>
        <dbReference type="ChEBI" id="CHEBI:29033"/>
    </cofactor>
    <text evidence="1">Binds 1 Fe(2+) ion per subunit.</text>
</comment>
<comment type="subcellular location">
    <subcellularLocation>
        <location evidence="1">Cytoplasm</location>
    </subcellularLocation>
</comment>
<comment type="similarity">
    <text evidence="1">Belongs to the KAE1 / TsaD family.</text>
</comment>
<feature type="chain" id="PRO_0000303647" description="tRNA N6-adenosine threonylcarbamoyltransferase">
    <location>
        <begin position="1"/>
        <end position="336"/>
    </location>
</feature>
<feature type="binding site" evidence="1">
    <location>
        <position position="115"/>
    </location>
    <ligand>
        <name>Fe cation</name>
        <dbReference type="ChEBI" id="CHEBI:24875"/>
    </ligand>
</feature>
<feature type="binding site" evidence="1">
    <location>
        <position position="119"/>
    </location>
    <ligand>
        <name>Fe cation</name>
        <dbReference type="ChEBI" id="CHEBI:24875"/>
    </ligand>
</feature>
<feature type="binding site" evidence="1">
    <location>
        <begin position="136"/>
        <end position="140"/>
    </location>
    <ligand>
        <name>substrate</name>
    </ligand>
</feature>
<feature type="binding site" evidence="1">
    <location>
        <position position="136"/>
    </location>
    <ligand>
        <name>Fe cation</name>
        <dbReference type="ChEBI" id="CHEBI:24875"/>
    </ligand>
</feature>
<feature type="binding site" evidence="1">
    <location>
        <position position="168"/>
    </location>
    <ligand>
        <name>substrate</name>
    </ligand>
</feature>
<feature type="binding site" evidence="1">
    <location>
        <position position="185"/>
    </location>
    <ligand>
        <name>substrate</name>
    </ligand>
</feature>
<feature type="binding site" evidence="1">
    <location>
        <position position="266"/>
    </location>
    <ligand>
        <name>substrate</name>
    </ligand>
</feature>
<feature type="binding site" evidence="1">
    <location>
        <position position="294"/>
    </location>
    <ligand>
        <name>Fe cation</name>
        <dbReference type="ChEBI" id="CHEBI:24875"/>
    </ligand>
</feature>
<evidence type="ECO:0000255" key="1">
    <source>
        <dbReference type="HAMAP-Rule" id="MF_01446"/>
    </source>
</evidence>
<accession>A1RXD1</accession>
<dbReference type="EC" id="2.3.1.234" evidence="1"/>
<dbReference type="EMBL" id="CP000505">
    <property type="protein sequence ID" value="ABL77861.1"/>
    <property type="molecule type" value="Genomic_DNA"/>
</dbReference>
<dbReference type="SMR" id="A1RXD1"/>
<dbReference type="STRING" id="368408.Tpen_0452"/>
<dbReference type="EnsemblBacteria" id="ABL77861">
    <property type="protein sequence ID" value="ABL77861"/>
    <property type="gene ID" value="Tpen_0452"/>
</dbReference>
<dbReference type="KEGG" id="tpe:Tpen_0452"/>
<dbReference type="eggNOG" id="arCOG01183">
    <property type="taxonomic scope" value="Archaea"/>
</dbReference>
<dbReference type="HOGENOM" id="CLU_023208_2_2_2"/>
<dbReference type="Proteomes" id="UP000000641">
    <property type="component" value="Chromosome"/>
</dbReference>
<dbReference type="GO" id="GO:0005737">
    <property type="term" value="C:cytoplasm"/>
    <property type="evidence" value="ECO:0007669"/>
    <property type="project" value="UniProtKB-SubCell"/>
</dbReference>
<dbReference type="GO" id="GO:0000408">
    <property type="term" value="C:EKC/KEOPS complex"/>
    <property type="evidence" value="ECO:0007669"/>
    <property type="project" value="InterPro"/>
</dbReference>
<dbReference type="GO" id="GO:0005506">
    <property type="term" value="F:iron ion binding"/>
    <property type="evidence" value="ECO:0007669"/>
    <property type="project" value="UniProtKB-UniRule"/>
</dbReference>
<dbReference type="GO" id="GO:0061711">
    <property type="term" value="F:N(6)-L-threonylcarbamoyladenine synthase activity"/>
    <property type="evidence" value="ECO:0007669"/>
    <property type="project" value="UniProtKB-EC"/>
</dbReference>
<dbReference type="GO" id="GO:0002949">
    <property type="term" value="P:tRNA threonylcarbamoyladenosine modification"/>
    <property type="evidence" value="ECO:0007669"/>
    <property type="project" value="UniProtKB-UniRule"/>
</dbReference>
<dbReference type="CDD" id="cd24131">
    <property type="entry name" value="ASKHA_NBD_Kae1_arch_bac"/>
    <property type="match status" value="1"/>
</dbReference>
<dbReference type="FunFam" id="3.30.420.40:FF:000037">
    <property type="entry name" value="Probable tRNA N6-adenosine threonylcarbamoyltransferase"/>
    <property type="match status" value="1"/>
</dbReference>
<dbReference type="Gene3D" id="3.30.420.40">
    <property type="match status" value="2"/>
</dbReference>
<dbReference type="HAMAP" id="MF_01446">
    <property type="entry name" value="Kae1"/>
    <property type="match status" value="1"/>
</dbReference>
<dbReference type="InterPro" id="IPR043129">
    <property type="entry name" value="ATPase_NBD"/>
</dbReference>
<dbReference type="InterPro" id="IPR000905">
    <property type="entry name" value="Gcp-like_dom"/>
</dbReference>
<dbReference type="InterPro" id="IPR017861">
    <property type="entry name" value="KAE1/TsaD"/>
</dbReference>
<dbReference type="InterPro" id="IPR034680">
    <property type="entry name" value="Kae1_archaea_euk"/>
</dbReference>
<dbReference type="NCBIfam" id="TIGR03722">
    <property type="entry name" value="arch_KAE1"/>
    <property type="match status" value="1"/>
</dbReference>
<dbReference type="NCBIfam" id="TIGR00329">
    <property type="entry name" value="gcp_kae1"/>
    <property type="match status" value="1"/>
</dbReference>
<dbReference type="PANTHER" id="PTHR11735">
    <property type="entry name" value="TRNA N6-ADENOSINE THREONYLCARBAMOYLTRANSFERASE"/>
    <property type="match status" value="1"/>
</dbReference>
<dbReference type="PANTHER" id="PTHR11735:SF14">
    <property type="entry name" value="TRNA N6-ADENOSINE THREONYLCARBAMOYLTRANSFERASE"/>
    <property type="match status" value="1"/>
</dbReference>
<dbReference type="Pfam" id="PF00814">
    <property type="entry name" value="TsaD"/>
    <property type="match status" value="1"/>
</dbReference>
<dbReference type="PRINTS" id="PR00789">
    <property type="entry name" value="OSIALOPTASE"/>
</dbReference>
<dbReference type="SUPFAM" id="SSF53067">
    <property type="entry name" value="Actin-like ATPase domain"/>
    <property type="match status" value="1"/>
</dbReference>